<keyword id="KW-0326">Glycosidase</keyword>
<keyword id="KW-0378">Hydrolase</keyword>
<keyword id="KW-1185">Reference proteome</keyword>
<proteinExistence type="inferred from homology"/>
<evidence type="ECO:0000255" key="1">
    <source>
        <dbReference type="HAMAP-Rule" id="MF_01574"/>
    </source>
</evidence>
<gene>
    <name evidence="1" type="primary">lacG1</name>
    <name type="ordered locus">spr0424</name>
</gene>
<reference key="1">
    <citation type="journal article" date="2001" name="J. Bacteriol.">
        <title>Genome of the bacterium Streptococcus pneumoniae strain R6.</title>
        <authorList>
            <person name="Hoskins J."/>
            <person name="Alborn W.E. Jr."/>
            <person name="Arnold J."/>
            <person name="Blaszczak L.C."/>
            <person name="Burgett S."/>
            <person name="DeHoff B.S."/>
            <person name="Estrem S.T."/>
            <person name="Fritz L."/>
            <person name="Fu D.-J."/>
            <person name="Fuller W."/>
            <person name="Geringer C."/>
            <person name="Gilmour R."/>
            <person name="Glass J.S."/>
            <person name="Khoja H."/>
            <person name="Kraft A.R."/>
            <person name="Lagace R.E."/>
            <person name="LeBlanc D.J."/>
            <person name="Lee L.N."/>
            <person name="Lefkowitz E.J."/>
            <person name="Lu J."/>
            <person name="Matsushima P."/>
            <person name="McAhren S.M."/>
            <person name="McHenney M."/>
            <person name="McLeaster K."/>
            <person name="Mundy C.W."/>
            <person name="Nicas T.I."/>
            <person name="Norris F.H."/>
            <person name="O'Gara M."/>
            <person name="Peery R.B."/>
            <person name="Robertson G.T."/>
            <person name="Rockey P."/>
            <person name="Sun P.-M."/>
            <person name="Winkler M.E."/>
            <person name="Yang Y."/>
            <person name="Young-Bellido M."/>
            <person name="Zhao G."/>
            <person name="Zook C.A."/>
            <person name="Baltz R.H."/>
            <person name="Jaskunas S.R."/>
            <person name="Rosteck P.R. Jr."/>
            <person name="Skatrud P.L."/>
            <person name="Glass J.I."/>
        </authorList>
    </citation>
    <scope>NUCLEOTIDE SEQUENCE [LARGE SCALE GENOMIC DNA]</scope>
    <source>
        <strain>ATCC BAA-255 / R6</strain>
    </source>
</reference>
<organism>
    <name type="scientific">Streptococcus pneumoniae (strain ATCC BAA-255 / R6)</name>
    <dbReference type="NCBI Taxonomy" id="171101"/>
    <lineage>
        <taxon>Bacteria</taxon>
        <taxon>Bacillati</taxon>
        <taxon>Bacillota</taxon>
        <taxon>Bacilli</taxon>
        <taxon>Lactobacillales</taxon>
        <taxon>Streptococcaceae</taxon>
        <taxon>Streptococcus</taxon>
    </lineage>
</organism>
<comment type="catalytic activity">
    <reaction evidence="1">
        <text>a 6-phospho-beta-D-galactoside + H2O = D-galactose 6-phosphate + an alcohol</text>
        <dbReference type="Rhea" id="RHEA:24568"/>
        <dbReference type="ChEBI" id="CHEBI:15377"/>
        <dbReference type="ChEBI" id="CHEBI:30879"/>
        <dbReference type="ChEBI" id="CHEBI:58534"/>
        <dbReference type="ChEBI" id="CHEBI:91004"/>
        <dbReference type="EC" id="3.2.1.85"/>
    </reaction>
</comment>
<comment type="pathway">
    <text evidence="1">Carbohydrate metabolism; lactose degradation; D-galactose 6-phosphate and beta-D-glucose from lactose 6-phosphate: step 1/1.</text>
</comment>
<comment type="similarity">
    <text evidence="1">Belongs to the glycosyl hydrolase 1 family.</text>
</comment>
<dbReference type="EC" id="3.2.1.85" evidence="1"/>
<dbReference type="EMBL" id="AE007317">
    <property type="protein sequence ID" value="AAK99228.1"/>
    <property type="molecule type" value="Genomic_DNA"/>
</dbReference>
<dbReference type="PIR" id="H97924">
    <property type="entry name" value="H97924"/>
</dbReference>
<dbReference type="RefSeq" id="NP_358018.1">
    <property type="nucleotide sequence ID" value="NC_003098.1"/>
</dbReference>
<dbReference type="RefSeq" id="WP_000429432.1">
    <property type="nucleotide sequence ID" value="NC_003098.1"/>
</dbReference>
<dbReference type="SMR" id="Q8DQZ1"/>
<dbReference type="STRING" id="171101.spr0424"/>
<dbReference type="CAZy" id="GH1">
    <property type="family name" value="Glycoside Hydrolase Family 1"/>
</dbReference>
<dbReference type="KEGG" id="spr:spr0424"/>
<dbReference type="PATRIC" id="fig|171101.6.peg.466"/>
<dbReference type="eggNOG" id="COG2723">
    <property type="taxonomic scope" value="Bacteria"/>
</dbReference>
<dbReference type="HOGENOM" id="CLU_001859_1_3_9"/>
<dbReference type="UniPathway" id="UPA00542">
    <property type="reaction ID" value="UER00605"/>
</dbReference>
<dbReference type="Proteomes" id="UP000000586">
    <property type="component" value="Chromosome"/>
</dbReference>
<dbReference type="GO" id="GO:0005829">
    <property type="term" value="C:cytosol"/>
    <property type="evidence" value="ECO:0000318"/>
    <property type="project" value="GO_Central"/>
</dbReference>
<dbReference type="GO" id="GO:0033920">
    <property type="term" value="F:6-phospho-beta-galactosidase activity"/>
    <property type="evidence" value="ECO:0007669"/>
    <property type="project" value="UniProtKB-UniRule"/>
</dbReference>
<dbReference type="GO" id="GO:0008422">
    <property type="term" value="F:beta-glucosidase activity"/>
    <property type="evidence" value="ECO:0000318"/>
    <property type="project" value="GO_Central"/>
</dbReference>
<dbReference type="GO" id="GO:0016052">
    <property type="term" value="P:carbohydrate catabolic process"/>
    <property type="evidence" value="ECO:0000318"/>
    <property type="project" value="GO_Central"/>
</dbReference>
<dbReference type="GO" id="GO:0019512">
    <property type="term" value="P:lactose catabolic process via tagatose-6-phosphate"/>
    <property type="evidence" value="ECO:0007669"/>
    <property type="project" value="InterPro"/>
</dbReference>
<dbReference type="FunFam" id="3.20.20.80:FF:000004">
    <property type="entry name" value="Beta-glucosidase 6-phospho-beta-glucosidase"/>
    <property type="match status" value="1"/>
</dbReference>
<dbReference type="Gene3D" id="3.20.20.80">
    <property type="entry name" value="Glycosidases"/>
    <property type="match status" value="1"/>
</dbReference>
<dbReference type="HAMAP" id="MF_01574">
    <property type="entry name" value="LacG"/>
    <property type="match status" value="1"/>
</dbReference>
<dbReference type="InterPro" id="IPR005928">
    <property type="entry name" value="6P-beta-galactosidase"/>
</dbReference>
<dbReference type="InterPro" id="IPR001360">
    <property type="entry name" value="Glyco_hydro_1"/>
</dbReference>
<dbReference type="InterPro" id="IPR017853">
    <property type="entry name" value="Glycoside_hydrolase_SF"/>
</dbReference>
<dbReference type="NCBIfam" id="TIGR01233">
    <property type="entry name" value="lacG"/>
    <property type="match status" value="1"/>
</dbReference>
<dbReference type="NCBIfam" id="NF010036">
    <property type="entry name" value="PRK13511.1"/>
    <property type="match status" value="1"/>
</dbReference>
<dbReference type="PANTHER" id="PTHR10353">
    <property type="entry name" value="GLYCOSYL HYDROLASE"/>
    <property type="match status" value="1"/>
</dbReference>
<dbReference type="PANTHER" id="PTHR10353:SF36">
    <property type="entry name" value="LP05116P"/>
    <property type="match status" value="1"/>
</dbReference>
<dbReference type="Pfam" id="PF00232">
    <property type="entry name" value="Glyco_hydro_1"/>
    <property type="match status" value="1"/>
</dbReference>
<dbReference type="PRINTS" id="PR00131">
    <property type="entry name" value="GLHYDRLASE1"/>
</dbReference>
<dbReference type="SUPFAM" id="SSF51445">
    <property type="entry name" value="(Trans)glycosidases"/>
    <property type="match status" value="1"/>
</dbReference>
<feature type="chain" id="PRO_0000260732" description="6-phospho-beta-galactosidase 1">
    <location>
        <begin position="1"/>
        <end position="470"/>
    </location>
</feature>
<feature type="active site" description="Proton donor" evidence="1">
    <location>
        <position position="164"/>
    </location>
</feature>
<feature type="active site" description="Nucleophile" evidence="1">
    <location>
        <position position="378"/>
    </location>
</feature>
<feature type="binding site" evidence="1">
    <location>
        <position position="23"/>
    </location>
    <ligand>
        <name>D-galactose 6-phosphate</name>
        <dbReference type="ChEBI" id="CHEBI:91004"/>
    </ligand>
</feature>
<feature type="binding site" evidence="1">
    <location>
        <position position="120"/>
    </location>
    <ligand>
        <name>D-galactose 6-phosphate</name>
        <dbReference type="ChEBI" id="CHEBI:91004"/>
    </ligand>
</feature>
<feature type="binding site" evidence="1">
    <location>
        <position position="163"/>
    </location>
    <ligand>
        <name>D-galactose 6-phosphate</name>
        <dbReference type="ChEBI" id="CHEBI:91004"/>
    </ligand>
</feature>
<feature type="binding site" evidence="1">
    <location>
        <position position="164"/>
    </location>
    <ligand>
        <name>D-galactose 6-phosphate</name>
        <dbReference type="ChEBI" id="CHEBI:91004"/>
    </ligand>
</feature>
<feature type="binding site" evidence="1">
    <location>
        <position position="300"/>
    </location>
    <ligand>
        <name>D-galactose 6-phosphate</name>
        <dbReference type="ChEBI" id="CHEBI:91004"/>
    </ligand>
</feature>
<feature type="binding site" evidence="1">
    <location>
        <position position="434"/>
    </location>
    <ligand>
        <name>D-galactose 6-phosphate</name>
        <dbReference type="ChEBI" id="CHEBI:91004"/>
    </ligand>
</feature>
<feature type="binding site" evidence="1">
    <location>
        <position position="435"/>
    </location>
    <ligand>
        <name>D-galactose 6-phosphate</name>
        <dbReference type="ChEBI" id="CHEBI:91004"/>
    </ligand>
</feature>
<feature type="binding site" evidence="1">
    <location>
        <position position="441"/>
    </location>
    <ligand>
        <name>D-galactose 6-phosphate</name>
        <dbReference type="ChEBI" id="CHEBI:91004"/>
    </ligand>
</feature>
<feature type="binding site" evidence="1">
    <location>
        <position position="443"/>
    </location>
    <ligand>
        <name>D-galactose 6-phosphate</name>
        <dbReference type="ChEBI" id="CHEBI:91004"/>
    </ligand>
</feature>
<name>LACG1_STRR6</name>
<accession>Q8DQZ1</accession>
<sequence>MENLQVKALPKEFLLGTATAAYQVEGATRVDGKGINMWDVYLQENSPFLPDPASDFYYRYEEDIALAAEHGLQALRLSISWVRIFPDIDGDANVLAVHYYHRVFQSCLKHNVIPFVSLHHFDSPQKMLETGDWLNRENIDRFIRYARFCFQEFTEVKHWFTINELMSLAAGQYIGGQFPPNHHFQLSEAIQANHNMLLAHALAVLEFHQLGIEGKVGCIHALKPGYPIDGQKENILAAKRYDVYNNKFLLDGTFLGYYSEDTLFHLNQILEANNSSFIIEDGDLEIMKRAAPLNTMFVMNYYRSEFIREYKGENRQEFNSTGIKGQSSFKLNALGEFVKKPGIPTTDWDWNIYPQGLFDMLLRIKEEYPQHPVIYLTENGTALKEVKPEGENDIIDDSKRIRYIEQHLHKVLEARDRGVNIQGYFIWSLQDQFSWANGYNKRYGLFFVDYETQKRYIKKSALWVKGLKRN</sequence>
<protein>
    <recommendedName>
        <fullName evidence="1">6-phospho-beta-galactosidase 1</fullName>
        <ecNumber evidence="1">3.2.1.85</ecNumber>
    </recommendedName>
    <alternativeName>
        <fullName evidence="1">Beta-D-phosphogalactoside galactohydrolase 1</fullName>
        <shortName evidence="1">PGALase 1</shortName>
    </alternativeName>
    <alternativeName>
        <fullName evidence="1">P-beta-Gal 1</fullName>
        <shortName evidence="1">PBG 1</shortName>
    </alternativeName>
</protein>